<reference key="1">
    <citation type="journal article" date="2001" name="Appl. Microbiol. Biotechnol.">
        <title>Biotechnology and genetics of ergot alkaloids.</title>
        <authorList>
            <person name="Tudzynski P."/>
            <person name="Correia T."/>
            <person name="Keller U."/>
        </authorList>
    </citation>
    <scope>NUCLEOTIDE SEQUENCE [GENOMIC DNA]</scope>
    <scope>BIOTECHNOLOGY</scope>
    <source>
        <strain>P1 / 1029/N5</strain>
    </source>
</reference>
<reference key="2">
    <citation type="journal article" date="2003" name="Chem. Biol.">
        <title>Molecular cloning and analysis of the ergopeptine assembly system in the ergot fungus Claviceps purpurea.</title>
        <authorList>
            <person name="Correia T."/>
            <person name="Grammel N."/>
            <person name="Ortel I."/>
            <person name="Keller U."/>
            <person name="Tudzynski P."/>
        </authorList>
    </citation>
    <scope>FUNCTION</scope>
</reference>
<reference key="3">
    <citation type="journal article" date="2004" name="Fungal Genet. Biol.">
        <title>The determinant step in ergot alkaloid biosynthesis by an endophyte of perennial ryegrass.</title>
        <authorList>
            <person name="Wang J."/>
            <person name="Machado C."/>
            <person name="Panaccione D.G."/>
            <person name="Tsai H.-F."/>
            <person name="Schardl C.L."/>
        </authorList>
    </citation>
    <scope>FUNCTION</scope>
    <source>
        <strain>ATCC 20102 / Farmitalia FI 32/17</strain>
    </source>
</reference>
<reference key="4">
    <citation type="journal article" date="2005" name="Phytochemistry">
        <title>The ergot alkaloid gene cluster in Claviceps purpurea: extension of the cluster sequence and intra species evolution.</title>
        <authorList>
            <person name="Haarmann T."/>
            <person name="Machado C."/>
            <person name="Lubbe Y."/>
            <person name="Correia T."/>
            <person name="Schardl C.L."/>
            <person name="Panaccione D.G."/>
            <person name="Tudzynski P."/>
        </authorList>
    </citation>
    <scope>FUNCTION</scope>
    <scope>IDENTIFICATION IN THE EAS CLUSTER</scope>
</reference>
<reference key="5">
    <citation type="journal article" date="2006" name="ChemBioChem">
        <title>Identification of the cytochrome P450 monooxygenase that bridges the clavine and ergoline alkaloid pathways.</title>
        <authorList>
            <person name="Haarmann T."/>
            <person name="Ortel I."/>
            <person name="Tudzynski P."/>
            <person name="Keller U."/>
        </authorList>
    </citation>
    <scope>FUNCTION</scope>
    <source>
        <strain>P1 / 1029/N5</strain>
    </source>
</reference>
<reference key="6">
    <citation type="journal article" date="2007" name="Appl. Environ. Microbiol.">
        <title>A complex ergovaline gene cluster in epichloe endophytes of grasses.</title>
        <authorList>
            <person name="Fleetwood D.J."/>
            <person name="Scott B."/>
            <person name="Lane G.A."/>
            <person name="Tanaka A."/>
            <person name="Johnson R.D."/>
        </authorList>
    </citation>
    <scope>FUNCTION</scope>
</reference>
<reference key="7">
    <citation type="journal article" date="2007" name="Appl. Environ. Microbiol.">
        <title>Comparison of ergot alkaloid biosynthesis gene clusters in Claviceps species indicates loss of late pathway steps in evolution of C. fusiformis.</title>
        <authorList>
            <person name="Lorenz N."/>
            <person name="Wilson E.V."/>
            <person name="Machado C."/>
            <person name="Schardl C.L."/>
            <person name="Tudzynski P."/>
        </authorList>
    </citation>
    <scope>FUNCTION</scope>
</reference>
<reference key="8">
    <citation type="journal article" date="2008" name="Fungal Genet. Biol.">
        <title>Use of a nonhomologous end joining deficient strain (Deltaku70) of the ergot fungus Claviceps purpurea for identification of a nonribosomal peptide synthetase gene involved in ergotamine biosynthesis.</title>
        <authorList>
            <person name="Haarmann T."/>
            <person name="Lorenz N."/>
            <person name="Tudzynski P."/>
        </authorList>
    </citation>
    <scope>FUNCTION</scope>
</reference>
<reference key="9">
    <citation type="journal article" date="2009" name="J. Biol. Chem.">
        <title>Combinatorial assembly of simple and complex D-lysergic acid alkaloid peptide classes in the ergot fungus Claviceps purpurea.</title>
        <authorList>
            <person name="Ortel I."/>
            <person name="Keller U."/>
        </authorList>
    </citation>
    <scope>FUNCTION</scope>
</reference>
<reference key="10">
    <citation type="journal article" date="2010" name="Appl. Environ. Microbiol.">
        <title>Alkaloid cluster gene ccsA of the ergot fungus Claviceps purpurea encodes chanoclavine I synthase, a flavin adenine dinucleotide-containing oxidoreductase mediating the transformation of N-methyl-dimethylallyltryptophan to chanoclavine I.</title>
        <authorList>
            <person name="Lorenz N."/>
            <person name="Olsovska J."/>
            <person name="Sulc M."/>
            <person name="Tudzynski P."/>
        </authorList>
    </citation>
    <scope>FUNCTION</scope>
</reference>
<reference key="11">
    <citation type="journal article" date="2010" name="J. Am. Chem. Soc.">
        <title>Controlling a structural branch point in ergot alkaloid biosynthesis.</title>
        <authorList>
            <person name="Cheng J.Z."/>
            <person name="Coyle C.M."/>
            <person name="Panaccione D.G."/>
            <person name="O'Connor S.E."/>
        </authorList>
    </citation>
    <scope>FUNCTION</scope>
    <source>
        <strain>ATCC 20102 / Farmitalia FI 32/17</strain>
    </source>
</reference>
<reference key="12">
    <citation type="journal article" date="2011" name="Curr. Genet.">
        <title>Ergot cluster-encoded catalase is required for synthesis of chanoclavine-I in Aspergillus fumigatus.</title>
        <authorList>
            <person name="Goetz K.E."/>
            <person name="Coyle C.M."/>
            <person name="Cheng J.Z."/>
            <person name="O'Connor S.E."/>
            <person name="Panaccione D.G."/>
        </authorList>
    </citation>
    <scope>FUNCTION</scope>
</reference>
<reference key="13">
    <citation type="journal article" date="2011" name="Org. Biomol. Chem.">
        <title>New insights into ergot alkaloid biosynthesis in Claviceps purpurea: an agroclavine synthase EasG catalyses, via a non-enzymatic adduct with reduced glutathione, the conversion of chanoclavine-I aldehyde to agroclavine.</title>
        <authorList>
            <person name="Matuschek M."/>
            <person name="Wallwey C."/>
            <person name="Xie X."/>
            <person name="Li S.M."/>
        </authorList>
    </citation>
    <scope>FUNCTION</scope>
</reference>
<reference key="14">
    <citation type="journal article" date="2014" name="Chem. Biol.">
        <title>Cyclolization of D-lysergic acid alkaloid peptides.</title>
        <authorList>
            <person name="Havemann J."/>
            <person name="Vogel D."/>
            <person name="Loll B."/>
            <person name="Keller U."/>
        </authorList>
    </citation>
    <scope>FUNCTION</scope>
</reference>
<proteinExistence type="inferred from homology"/>
<sequence length="473" mass="53629">MASEVSVASSGSEHSGAQKCPFQDPGLSSMDQDSRLRDILSRFNREKIPERAVHARGAGAYGEFEVTHDVSDICDIDMLLGVGKKTPCVVRFSTTTLERGSAESVRDVKGMAIKHFTQDGNWDWVCLNIPMFFIRDPSKFPDMVHAQRPDPTTNVANPSRWWEFVCNNHETLHMVMFQFSDFGTMFDYRSMSGYAAHAYKWVMPDGSWKYVHWFLASDQGPNFETGHQAKQIGADDAESATRDLYQSLERGEYPSWTVKVQVVDPEDAPKLPFNILDVTKHWNLGNYPPDIDVIPGRTLGKLTLKKEPQDYFEEIEQLAFSPSRLVHGVEASEDPMLQARLFAYPDAQKHRLGPNNLDLPANRTKKFADGARPEKAEMAPQKVPSQEHADWVSQVKSSSWSEPNETDYKFPREFWKALPRLRGEAFQNSLVVNMAKSVSQVPVDMREKVYSTLALIADDLADRVRTMTEEIVE</sequence>
<gene>
    <name evidence="16" type="primary">easC</name>
    <name evidence="15" type="synonym">cpcat2</name>
</gene>
<name>EASC_CLAPU</name>
<organism>
    <name type="scientific">Claviceps purpurea</name>
    <name type="common">Ergot fungus</name>
    <name type="synonym">Sphacelia segetum</name>
    <dbReference type="NCBI Taxonomy" id="5111"/>
    <lineage>
        <taxon>Eukaryota</taxon>
        <taxon>Fungi</taxon>
        <taxon>Dikarya</taxon>
        <taxon>Ascomycota</taxon>
        <taxon>Pezizomycotina</taxon>
        <taxon>Sordariomycetes</taxon>
        <taxon>Hypocreomycetidae</taxon>
        <taxon>Hypocreales</taxon>
        <taxon>Clavicipitaceae</taxon>
        <taxon>Claviceps</taxon>
    </lineage>
</organism>
<protein>
    <recommendedName>
        <fullName evidence="16">Catalase easC</fullName>
        <ecNumber evidence="18">1.11.-.-</ecNumber>
    </recommendedName>
    <alternativeName>
        <fullName evidence="15">Catalase 2</fullName>
    </alternativeName>
    <alternativeName>
        <fullName evidence="16">Ergot alkaloid synthesis protein C</fullName>
    </alternativeName>
</protein>
<accession>Q6ZXC2</accession>
<comment type="function">
    <text evidence="2 4 5 6 7 8 9 10 11 12 13 14 19 20">Catalase; part of the gene cluster that mediates the biosynthesis of fungal ergot alkaloid (PubMed:14700635, PubMed:14732265, PubMed:15904941, PubMed:17308187, PubMed:17720822). DmaW catalyzes the first step of ergot alkaloid biosynthesis by condensing dimethylallyl diphosphate (DMAP) and tryptophan to form 4-dimethylallyl-L-tryptophan (PubMed:14732265). The second step is catalyzed by the methyltransferase easF that methylates 4-dimethylallyl-L-tryptophan in the presence of S-adenosyl-L-methionine, resulting in the formation of 4-dimethylallyl-L-abrine (By similarity). The catalase easC and the FAD-dependent oxidoreductase easE then transform 4-dimethylallyl-L-abrine to chanoclavine-I which is further oxidized by easD in the presence of NAD(+), resulting in the formation of chanoclavine-I aldehyde (PubMed:20118373, PubMed:21409592). Agroclavine dehydrogenase easG then mediates the conversion of chanoclavine-I aldehyde to agroclavine via a non-enzymatic adduct reaction: the substrate is an iminium intermediate that is formed spontaneously from chanoclavine-I aldehyde in the presence of glutathione (PubMed:20735127, PubMed:21494745). The presence of easA is not required to complete this reaction (PubMed:21494745). Further conversion of agroclavine to paspalic acid is a two-step process involving oxidation of agroclavine to elymoclavine and of elymoclavine to paspalic acid, the second step being performed by the elymoclavine oxidase cloA (PubMed:16538694, PubMed:17720822). Paspalic acid is then further converted to D-lysergic acid (PubMed:15904941). Ergopeptines are assembled from D-lysergic acid and three different amino acids by the D-lysergyl-peptide-synthetases composed each of a monomudular and a trimodular nonribosomal peptide synthetase subunit (PubMed:14700635, PubMed:15904941). LpsB and lpsC encode the monomodular subunits responsible for D-lysergic acid activation and incorporation into the ergopeptine backbone (PubMed:14700635). LpsA1 and A2 subunits encode the trimodular nonribosomal peptide synthetase assembling the tripeptide portion of ergopeptines (PubMed:14700635). LpsA1 is responsible for formation of the major ergopeptine, ergotamine, and lpsA2 for alpha-ergocryptine, the minor ergopeptine of the total alkaloid mixture elaborated by C.purpurea (PubMed:17560817, PubMed:19139103). D-lysergyl-tripeptides are assembled by the nonribosomal peptide synthetases and released as N-(D-lysergyl-aminoacyl)-lactams (PubMed:24361048). Cyclolization of the D-lysergyl-tripeptides is performed by the Fe(2+)/2-ketoglutarate-dependent dioxygenase easH which introduces a hydroxyl group into N-(D-lysergyl-aminoacyl)-lactam at alpha-C of the aminoacyl residue followed by spontaneous condensation with the terminal lactam carbonyl group (PubMed:24361048).</text>
</comment>
<comment type="cofactor">
    <cofactor evidence="1">
        <name>heme</name>
        <dbReference type="ChEBI" id="CHEBI:30413"/>
    </cofactor>
</comment>
<comment type="pathway">
    <text evidence="18">Alkaloid biosynthesis; ergot alkaloid biosynthesis.</text>
</comment>
<comment type="similarity">
    <text evidence="17">Belongs to the catalase family.</text>
</comment>
<keyword id="KW-0017">Alkaloid metabolism</keyword>
<keyword id="KW-0349">Heme</keyword>
<keyword id="KW-0376">Hydrogen peroxide</keyword>
<keyword id="KW-0408">Iron</keyword>
<keyword id="KW-0479">Metal-binding</keyword>
<keyword id="KW-0560">Oxidoreductase</keyword>
<keyword id="KW-0575">Peroxidase</keyword>
<dbReference type="EC" id="1.11.-.-" evidence="18"/>
<dbReference type="EMBL" id="AJ703808">
    <property type="protein sequence ID" value="CAG28311.1"/>
    <property type="molecule type" value="Genomic_DNA"/>
</dbReference>
<dbReference type="SMR" id="Q6ZXC2"/>
<dbReference type="VEuPathDB" id="FungiDB:CPUR_04081"/>
<dbReference type="UniPathway" id="UPA00327"/>
<dbReference type="GO" id="GO:0005739">
    <property type="term" value="C:mitochondrion"/>
    <property type="evidence" value="ECO:0007669"/>
    <property type="project" value="TreeGrafter"/>
</dbReference>
<dbReference type="GO" id="GO:0005777">
    <property type="term" value="C:peroxisome"/>
    <property type="evidence" value="ECO:0007669"/>
    <property type="project" value="TreeGrafter"/>
</dbReference>
<dbReference type="GO" id="GO:0004096">
    <property type="term" value="F:catalase activity"/>
    <property type="evidence" value="ECO:0007669"/>
    <property type="project" value="InterPro"/>
</dbReference>
<dbReference type="GO" id="GO:0020037">
    <property type="term" value="F:heme binding"/>
    <property type="evidence" value="ECO:0007669"/>
    <property type="project" value="InterPro"/>
</dbReference>
<dbReference type="GO" id="GO:0046872">
    <property type="term" value="F:metal ion binding"/>
    <property type="evidence" value="ECO:0007669"/>
    <property type="project" value="UniProtKB-KW"/>
</dbReference>
<dbReference type="GO" id="GO:0042744">
    <property type="term" value="P:hydrogen peroxide catabolic process"/>
    <property type="evidence" value="ECO:0007669"/>
    <property type="project" value="UniProtKB-KW"/>
</dbReference>
<dbReference type="GO" id="GO:0035835">
    <property type="term" value="P:indole alkaloid biosynthetic process"/>
    <property type="evidence" value="ECO:0007669"/>
    <property type="project" value="UniProtKB-UniPathway"/>
</dbReference>
<dbReference type="GO" id="GO:0042542">
    <property type="term" value="P:response to hydrogen peroxide"/>
    <property type="evidence" value="ECO:0007669"/>
    <property type="project" value="TreeGrafter"/>
</dbReference>
<dbReference type="CDD" id="cd08157">
    <property type="entry name" value="catalase_fungal"/>
    <property type="match status" value="1"/>
</dbReference>
<dbReference type="Gene3D" id="2.40.180.10">
    <property type="entry name" value="Catalase core domain"/>
    <property type="match status" value="1"/>
</dbReference>
<dbReference type="InterPro" id="IPR018028">
    <property type="entry name" value="Catalase"/>
</dbReference>
<dbReference type="InterPro" id="IPR024708">
    <property type="entry name" value="Catalase_AS"/>
</dbReference>
<dbReference type="InterPro" id="IPR024711">
    <property type="entry name" value="Catalase_clade1/3"/>
</dbReference>
<dbReference type="InterPro" id="IPR011614">
    <property type="entry name" value="Catalase_core"/>
</dbReference>
<dbReference type="InterPro" id="IPR002226">
    <property type="entry name" value="Catalase_haem_BS"/>
</dbReference>
<dbReference type="InterPro" id="IPR020835">
    <property type="entry name" value="Catalase_sf"/>
</dbReference>
<dbReference type="PANTHER" id="PTHR11465">
    <property type="entry name" value="CATALASE"/>
    <property type="match status" value="1"/>
</dbReference>
<dbReference type="PANTHER" id="PTHR11465:SF9">
    <property type="entry name" value="CATALASE"/>
    <property type="match status" value="1"/>
</dbReference>
<dbReference type="Pfam" id="PF00199">
    <property type="entry name" value="Catalase"/>
    <property type="match status" value="1"/>
</dbReference>
<dbReference type="PIRSF" id="PIRSF038928">
    <property type="entry name" value="Catalase_clade1-3"/>
    <property type="match status" value="1"/>
</dbReference>
<dbReference type="PRINTS" id="PR00067">
    <property type="entry name" value="CATALASE"/>
</dbReference>
<dbReference type="SMART" id="SM01060">
    <property type="entry name" value="Catalase"/>
    <property type="match status" value="1"/>
</dbReference>
<dbReference type="SUPFAM" id="SSF56634">
    <property type="entry name" value="Heme-dependent catalase-like"/>
    <property type="match status" value="1"/>
</dbReference>
<dbReference type="PROSITE" id="PS00437">
    <property type="entry name" value="CATALASE_1"/>
    <property type="match status" value="1"/>
</dbReference>
<dbReference type="PROSITE" id="PS00438">
    <property type="entry name" value="CATALASE_2"/>
    <property type="match status" value="1"/>
</dbReference>
<dbReference type="PROSITE" id="PS51402">
    <property type="entry name" value="CATALASE_3"/>
    <property type="match status" value="1"/>
</dbReference>
<feature type="chain" id="PRO_0000439121" description="Catalase easC">
    <location>
        <begin position="1"/>
        <end position="473"/>
    </location>
</feature>
<feature type="region of interest" description="Disordered" evidence="3">
    <location>
        <begin position="1"/>
        <end position="31"/>
    </location>
</feature>
<feature type="region of interest" description="Disordered" evidence="3">
    <location>
        <begin position="369"/>
        <end position="388"/>
    </location>
</feature>
<feature type="compositionally biased region" description="Low complexity" evidence="3">
    <location>
        <begin position="1"/>
        <end position="15"/>
    </location>
</feature>
<feature type="active site" evidence="1">
    <location>
        <position position="54"/>
    </location>
</feature>
<feature type="binding site" description="axial binding residue" evidence="1">
    <location>
        <position position="344"/>
    </location>
    <ligand>
        <name>heme</name>
        <dbReference type="ChEBI" id="CHEBI:30413"/>
    </ligand>
    <ligandPart>
        <name>Fe</name>
        <dbReference type="ChEBI" id="CHEBI:18248"/>
    </ligandPart>
</feature>
<evidence type="ECO:0000250" key="1">
    <source>
        <dbReference type="UniProtKB" id="P15202"/>
    </source>
</evidence>
<evidence type="ECO:0000250" key="2">
    <source>
        <dbReference type="UniProtKB" id="Q50EL0"/>
    </source>
</evidence>
<evidence type="ECO:0000256" key="3">
    <source>
        <dbReference type="SAM" id="MobiDB-lite"/>
    </source>
</evidence>
<evidence type="ECO:0000269" key="4">
    <source>
    </source>
</evidence>
<evidence type="ECO:0000269" key="5">
    <source>
    </source>
</evidence>
<evidence type="ECO:0000269" key="6">
    <source>
    </source>
</evidence>
<evidence type="ECO:0000269" key="7">
    <source>
    </source>
</evidence>
<evidence type="ECO:0000269" key="8">
    <source>
    </source>
</evidence>
<evidence type="ECO:0000269" key="9">
    <source>
    </source>
</evidence>
<evidence type="ECO:0000269" key="10">
    <source>
    </source>
</evidence>
<evidence type="ECO:0000269" key="11">
    <source>
    </source>
</evidence>
<evidence type="ECO:0000269" key="12">
    <source>
    </source>
</evidence>
<evidence type="ECO:0000269" key="13">
    <source>
    </source>
</evidence>
<evidence type="ECO:0000269" key="14">
    <source>
    </source>
</evidence>
<evidence type="ECO:0000303" key="15">
    <source>
    </source>
</evidence>
<evidence type="ECO:0000303" key="16">
    <source>
    </source>
</evidence>
<evidence type="ECO:0000305" key="17"/>
<evidence type="ECO:0000305" key="18">
    <source>
    </source>
</evidence>
<evidence type="ECO:0000305" key="19">
    <source>
    </source>
</evidence>
<evidence type="ECO:0000305" key="20">
    <source>
    </source>
</evidence>